<reference evidence="4" key="1">
    <citation type="journal article" date="2015" name="ACS Chem. Biol.">
        <title>Lysine-rich cyclotides: a new subclass of circular knotted proteins from Violaceae.</title>
        <authorList>
            <person name="Ravipati A.S."/>
            <person name="Henriques S.T."/>
            <person name="Poth A.G."/>
            <person name="Kaas Q."/>
            <person name="Wang C.K."/>
            <person name="Colgrave M.L."/>
            <person name="Craik D.J."/>
        </authorList>
    </citation>
    <scope>PROTEIN SEQUENCE</scope>
    <scope>FUNCTION</scope>
    <scope>MASS SPECTROMETRY</scope>
    <scope>IDENTIFICATION BY MASS SPECTROMETRY</scope>
    <scope>PRESENCE OF DISULFIDE BONDS</scope>
</reference>
<keyword id="KW-0204">Cytolysis</keyword>
<keyword id="KW-0903">Direct protein sequencing</keyword>
<keyword id="KW-1015">Disulfide bond</keyword>
<keyword id="KW-0960">Knottin</keyword>
<keyword id="KW-0611">Plant defense</keyword>
<proteinExistence type="evidence at protein level"/>
<accession>C0HK30</accession>
<name>CYML3_MELLF</name>
<evidence type="ECO:0000255" key="1">
    <source>
        <dbReference type="PROSITE-ProRule" id="PRU00395"/>
    </source>
</evidence>
<evidence type="ECO:0000269" key="2">
    <source>
    </source>
</evidence>
<evidence type="ECO:0000303" key="3">
    <source>
    </source>
</evidence>
<evidence type="ECO:0000305" key="4"/>
<evidence type="ECO:0000305" key="5">
    <source>
    </source>
</evidence>
<feature type="peptide" id="PRO_0000437509" description="Cyclotide mela-3" evidence="1 2">
    <location>
        <begin position="1"/>
        <end position="29"/>
    </location>
</feature>
<feature type="disulfide bond" evidence="1">
    <location>
        <begin position="5"/>
        <end position="19"/>
    </location>
</feature>
<feature type="disulfide bond" evidence="1">
    <location>
        <begin position="9"/>
        <end position="21"/>
    </location>
</feature>
<feature type="disulfide bond" evidence="1">
    <location>
        <begin position="14"/>
        <end position="26"/>
    </location>
</feature>
<feature type="cross-link" description="Cyclopeptide (Gly-Asp)" evidence="5">
    <location>
        <begin position="1"/>
        <end position="29"/>
    </location>
</feature>
<sequence>GKPICGETCFKGKCYTPGCTCSYPICKKD</sequence>
<comment type="function">
    <text evidence="1 2">Probably participates in a plant defense mechanism (Potential). Binds to and induces leakage in phospholipd membranes, particularly ones containing 1-palmitoyl-2-oleophosphatidylethanolamine (POPE) (PubMed:26322745). In vitro, displays cytotoxicity against cultured cells (PubMed:26322745). Not active against Gram-negative bacterium E.coli ATCC 25922 or Gram-positive bacterium S.aureus ATCC 25923 up to a concentration of 64 uM (PubMed:26322745).</text>
</comment>
<comment type="domain">
    <text evidence="4">The presence of a 'disulfide through disulfide knot' structurally defines this protein as a knottin.</text>
</comment>
<comment type="PTM">
    <text evidence="1">This is a cyclic peptide.</text>
</comment>
<comment type="PTM">
    <text evidence="2">Contains 3 disulfide bonds.</text>
</comment>
<comment type="mass spectrometry"/>
<comment type="similarity">
    <text evidence="3">Belongs to the cyclotide family. Moebuis subfamily.</text>
</comment>
<comment type="caution">
    <text evidence="1">This peptide is cyclic. The start position was chosen by similarity to Oak1 (kalata B1) for which the DNA sequence is known.</text>
</comment>
<dbReference type="SMR" id="C0HK30"/>
<dbReference type="GO" id="GO:0006952">
    <property type="term" value="P:defense response"/>
    <property type="evidence" value="ECO:0007669"/>
    <property type="project" value="UniProtKB-KW"/>
</dbReference>
<dbReference type="GO" id="GO:0031640">
    <property type="term" value="P:killing of cells of another organism"/>
    <property type="evidence" value="ECO:0007669"/>
    <property type="project" value="UniProtKB-KW"/>
</dbReference>
<dbReference type="InterPro" id="IPR005535">
    <property type="entry name" value="Cyclotide"/>
</dbReference>
<dbReference type="InterPro" id="IPR036146">
    <property type="entry name" value="Cyclotide_sf"/>
</dbReference>
<dbReference type="Pfam" id="PF03784">
    <property type="entry name" value="Cyclotide"/>
    <property type="match status" value="1"/>
</dbReference>
<dbReference type="SUPFAM" id="SSF57038">
    <property type="entry name" value="Cyclotides"/>
    <property type="match status" value="1"/>
</dbReference>
<dbReference type="PROSITE" id="PS51052">
    <property type="entry name" value="CYCLOTIDE"/>
    <property type="match status" value="1"/>
</dbReference>
<organism evidence="3">
    <name type="scientific">Melicytus latifolius</name>
    <name type="common">Norfolk Island mahoe</name>
    <name type="synonym">Hymenanthera latifolia</name>
    <dbReference type="NCBI Taxonomy" id="212268"/>
    <lineage>
        <taxon>Eukaryota</taxon>
        <taxon>Viridiplantae</taxon>
        <taxon>Streptophyta</taxon>
        <taxon>Embryophyta</taxon>
        <taxon>Tracheophyta</taxon>
        <taxon>Spermatophyta</taxon>
        <taxon>Magnoliopsida</taxon>
        <taxon>eudicotyledons</taxon>
        <taxon>Gunneridae</taxon>
        <taxon>Pentapetalae</taxon>
        <taxon>rosids</taxon>
        <taxon>fabids</taxon>
        <taxon>Malpighiales</taxon>
        <taxon>Violaceae</taxon>
        <taxon>Melicytus</taxon>
    </lineage>
</organism>
<protein>
    <recommendedName>
        <fullName evidence="3">Cyclotide mela-3</fullName>
    </recommendedName>
</protein>